<comment type="function">
    <text evidence="1">Coreceptor for SEMA3A and SEMA3F. Necessary for signaling by class 3 semaphorins and subsequent remodeling of the cytoskeleton. Plays a role in axon guidance in the developing nervous system. Regulates the migration of sympathetic neurons, but not of neural crest precursors. Required for normal dendrite spine morphology in pyramidal neurons. May play a role in regulating semaphorin-mediated programmed cell death in the developing nervous system. Class 3 semaphorins bind to a complex composed of a neuropilin and a plexin. The plexin modulates the affinity of the complex for specific semaphorins, and its cytoplasmic domain is required for the activation of down-stream signaling events in the cytoplasm (By similarity).</text>
</comment>
<comment type="subcellular location">
    <subcellularLocation>
        <location evidence="1">Cell membrane</location>
        <topology evidence="1">Single-pass type I membrane protein</topology>
    </subcellularLocation>
</comment>
<comment type="similarity">
    <text evidence="5">Belongs to the plexin family.</text>
</comment>
<keyword id="KW-1003">Cell membrane</keyword>
<keyword id="KW-0175">Coiled coil</keyword>
<keyword id="KW-1015">Disulfide bond</keyword>
<keyword id="KW-0325">Glycoprotein</keyword>
<keyword id="KW-0472">Membrane</keyword>
<keyword id="KW-0597">Phosphoprotein</keyword>
<keyword id="KW-0675">Receptor</keyword>
<keyword id="KW-1185">Reference proteome</keyword>
<keyword id="KW-0677">Repeat</keyword>
<keyword id="KW-0732">Signal</keyword>
<keyword id="KW-0812">Transmembrane</keyword>
<keyword id="KW-1133">Transmembrane helix</keyword>
<organism>
    <name type="scientific">Rattus norvegicus</name>
    <name type="common">Rat</name>
    <dbReference type="NCBI Taxonomy" id="10116"/>
    <lineage>
        <taxon>Eukaryota</taxon>
        <taxon>Metazoa</taxon>
        <taxon>Chordata</taxon>
        <taxon>Craniata</taxon>
        <taxon>Vertebrata</taxon>
        <taxon>Euteleostomi</taxon>
        <taxon>Mammalia</taxon>
        <taxon>Eutheria</taxon>
        <taxon>Euarchontoglires</taxon>
        <taxon>Glires</taxon>
        <taxon>Rodentia</taxon>
        <taxon>Myomorpha</taxon>
        <taxon>Muroidea</taxon>
        <taxon>Muridae</taxon>
        <taxon>Murinae</taxon>
        <taxon>Rattus</taxon>
    </lineage>
</organism>
<accession>D3ZPX4</accession>
<reference key="1">
    <citation type="journal article" date="2004" name="Nature">
        <title>Genome sequence of the Brown Norway rat yields insights into mammalian evolution.</title>
        <authorList>
            <person name="Gibbs R.A."/>
            <person name="Weinstock G.M."/>
            <person name="Metzker M.L."/>
            <person name="Muzny D.M."/>
            <person name="Sodergren E.J."/>
            <person name="Scherer S."/>
            <person name="Scott G."/>
            <person name="Steffen D."/>
            <person name="Worley K.C."/>
            <person name="Burch P.E."/>
            <person name="Okwuonu G."/>
            <person name="Hines S."/>
            <person name="Lewis L."/>
            <person name="Deramo C."/>
            <person name="Delgado O."/>
            <person name="Dugan-Rocha S."/>
            <person name="Miner G."/>
            <person name="Morgan M."/>
            <person name="Hawes A."/>
            <person name="Gill R."/>
            <person name="Holt R.A."/>
            <person name="Adams M.D."/>
            <person name="Amanatides P.G."/>
            <person name="Baden-Tillson H."/>
            <person name="Barnstead M."/>
            <person name="Chin S."/>
            <person name="Evans C.A."/>
            <person name="Ferriera S."/>
            <person name="Fosler C."/>
            <person name="Glodek A."/>
            <person name="Gu Z."/>
            <person name="Jennings D."/>
            <person name="Kraft C.L."/>
            <person name="Nguyen T."/>
            <person name="Pfannkoch C.M."/>
            <person name="Sitter C."/>
            <person name="Sutton G.G."/>
            <person name="Venter J.C."/>
            <person name="Woodage T."/>
            <person name="Smith D."/>
            <person name="Lee H.-M."/>
            <person name="Gustafson E."/>
            <person name="Cahill P."/>
            <person name="Kana A."/>
            <person name="Doucette-Stamm L."/>
            <person name="Weinstock K."/>
            <person name="Fechtel K."/>
            <person name="Weiss R.B."/>
            <person name="Dunn D.M."/>
            <person name="Green E.D."/>
            <person name="Blakesley R.W."/>
            <person name="Bouffard G.G."/>
            <person name="De Jong P.J."/>
            <person name="Osoegawa K."/>
            <person name="Zhu B."/>
            <person name="Marra M."/>
            <person name="Schein J."/>
            <person name="Bosdet I."/>
            <person name="Fjell C."/>
            <person name="Jones S."/>
            <person name="Krzywinski M."/>
            <person name="Mathewson C."/>
            <person name="Siddiqui A."/>
            <person name="Wye N."/>
            <person name="McPherson J."/>
            <person name="Zhao S."/>
            <person name="Fraser C.M."/>
            <person name="Shetty J."/>
            <person name="Shatsman S."/>
            <person name="Geer K."/>
            <person name="Chen Y."/>
            <person name="Abramzon S."/>
            <person name="Nierman W.C."/>
            <person name="Havlak P.H."/>
            <person name="Chen R."/>
            <person name="Durbin K.J."/>
            <person name="Egan A."/>
            <person name="Ren Y."/>
            <person name="Song X.-Z."/>
            <person name="Li B."/>
            <person name="Liu Y."/>
            <person name="Qin X."/>
            <person name="Cawley S."/>
            <person name="Cooney A.J."/>
            <person name="D'Souza L.M."/>
            <person name="Martin K."/>
            <person name="Wu J.Q."/>
            <person name="Gonzalez-Garay M.L."/>
            <person name="Jackson A.R."/>
            <person name="Kalafus K.J."/>
            <person name="McLeod M.P."/>
            <person name="Milosavljevic A."/>
            <person name="Virk D."/>
            <person name="Volkov A."/>
            <person name="Wheeler D.A."/>
            <person name="Zhang Z."/>
            <person name="Bailey J.A."/>
            <person name="Eichler E.E."/>
            <person name="Tuzun E."/>
            <person name="Birney E."/>
            <person name="Mongin E."/>
            <person name="Ureta-Vidal A."/>
            <person name="Woodwark C."/>
            <person name="Zdobnov E."/>
            <person name="Bork P."/>
            <person name="Suyama M."/>
            <person name="Torrents D."/>
            <person name="Alexandersson M."/>
            <person name="Trask B.J."/>
            <person name="Young J.M."/>
            <person name="Huang H."/>
            <person name="Wang H."/>
            <person name="Xing H."/>
            <person name="Daniels S."/>
            <person name="Gietzen D."/>
            <person name="Schmidt J."/>
            <person name="Stevens K."/>
            <person name="Vitt U."/>
            <person name="Wingrove J."/>
            <person name="Camara F."/>
            <person name="Mar Alba M."/>
            <person name="Abril J.F."/>
            <person name="Guigo R."/>
            <person name="Smit A."/>
            <person name="Dubchak I."/>
            <person name="Rubin E.M."/>
            <person name="Couronne O."/>
            <person name="Poliakov A."/>
            <person name="Huebner N."/>
            <person name="Ganten D."/>
            <person name="Goesele C."/>
            <person name="Hummel O."/>
            <person name="Kreitler T."/>
            <person name="Lee Y.-A."/>
            <person name="Monti J."/>
            <person name="Schulz H."/>
            <person name="Zimdahl H."/>
            <person name="Himmelbauer H."/>
            <person name="Lehrach H."/>
            <person name="Jacob H.J."/>
            <person name="Bromberg S."/>
            <person name="Gullings-Handley J."/>
            <person name="Jensen-Seaman M.I."/>
            <person name="Kwitek A.E."/>
            <person name="Lazar J."/>
            <person name="Pasko D."/>
            <person name="Tonellato P.J."/>
            <person name="Twigger S."/>
            <person name="Ponting C.P."/>
            <person name="Duarte J.M."/>
            <person name="Rice S."/>
            <person name="Goodstadt L."/>
            <person name="Beatson S.A."/>
            <person name="Emes R.D."/>
            <person name="Winter E.E."/>
            <person name="Webber C."/>
            <person name="Brandt P."/>
            <person name="Nyakatura G."/>
            <person name="Adetobi M."/>
            <person name="Chiaromonte F."/>
            <person name="Elnitski L."/>
            <person name="Eswara P."/>
            <person name="Hardison R.C."/>
            <person name="Hou M."/>
            <person name="Kolbe D."/>
            <person name="Makova K."/>
            <person name="Miller W."/>
            <person name="Nekrutenko A."/>
            <person name="Riemer C."/>
            <person name="Schwartz S."/>
            <person name="Taylor J."/>
            <person name="Yang S."/>
            <person name="Zhang Y."/>
            <person name="Lindpaintner K."/>
            <person name="Andrews T.D."/>
            <person name="Caccamo M."/>
            <person name="Clamp M."/>
            <person name="Clarke L."/>
            <person name="Curwen V."/>
            <person name="Durbin R.M."/>
            <person name="Eyras E."/>
            <person name="Searle S.M."/>
            <person name="Cooper G.M."/>
            <person name="Batzoglou S."/>
            <person name="Brudno M."/>
            <person name="Sidow A."/>
            <person name="Stone E.A."/>
            <person name="Payseur B.A."/>
            <person name="Bourque G."/>
            <person name="Lopez-Otin C."/>
            <person name="Puente X.S."/>
            <person name="Chakrabarti K."/>
            <person name="Chatterji S."/>
            <person name="Dewey C."/>
            <person name="Pachter L."/>
            <person name="Bray N."/>
            <person name="Yap V.B."/>
            <person name="Caspi A."/>
            <person name="Tesler G."/>
            <person name="Pevzner P.A."/>
            <person name="Haussler D."/>
            <person name="Roskin K.M."/>
            <person name="Baertsch R."/>
            <person name="Clawson H."/>
            <person name="Furey T.S."/>
            <person name="Hinrichs A.S."/>
            <person name="Karolchik D."/>
            <person name="Kent W.J."/>
            <person name="Rosenbloom K.R."/>
            <person name="Trumbower H."/>
            <person name="Weirauch M."/>
            <person name="Cooper D.N."/>
            <person name="Stenson P.D."/>
            <person name="Ma B."/>
            <person name="Brent M."/>
            <person name="Arumugam M."/>
            <person name="Shteynberg D."/>
            <person name="Copley R.R."/>
            <person name="Taylor M.S."/>
            <person name="Riethman H."/>
            <person name="Mudunuri U."/>
            <person name="Peterson J."/>
            <person name="Guyer M."/>
            <person name="Felsenfeld A."/>
            <person name="Old S."/>
            <person name="Mockrin S."/>
            <person name="Collins F.S."/>
        </authorList>
    </citation>
    <scope>NUCLEOTIDE SEQUENCE [LARGE SCALE GENOMIC DNA]</scope>
    <source>
        <strain>Brown Norway</strain>
    </source>
</reference>
<reference key="2">
    <citation type="submission" date="2005-07" db="EMBL/GenBank/DDBJ databases">
        <authorList>
            <person name="Mural R.J."/>
            <person name="Adams M.D."/>
            <person name="Myers E.W."/>
            <person name="Smith H.O."/>
            <person name="Venter J.C."/>
        </authorList>
    </citation>
    <scope>NUCLEOTIDE SEQUENCE [LARGE SCALE GENOMIC DNA]</scope>
    <source>
        <strain>Brown Norway</strain>
    </source>
</reference>
<proteinExistence type="inferred from homology"/>
<feature type="signal peptide" evidence="3">
    <location>
        <begin position="1"/>
        <end position="19"/>
    </location>
</feature>
<feature type="chain" id="PRO_0000411105" description="Plexin-A3">
    <location>
        <begin position="20"/>
        <end position="1872"/>
    </location>
</feature>
<feature type="topological domain" description="Extracellular" evidence="3">
    <location>
        <begin position="20"/>
        <end position="1220"/>
    </location>
</feature>
<feature type="transmembrane region" description="Helical" evidence="3">
    <location>
        <begin position="1221"/>
        <end position="1241"/>
    </location>
</feature>
<feature type="topological domain" description="Cytoplasmic" evidence="3">
    <location>
        <begin position="1242"/>
        <end position="1872"/>
    </location>
</feature>
<feature type="domain" description="Sema" evidence="4">
    <location>
        <begin position="20"/>
        <end position="489"/>
    </location>
</feature>
<feature type="domain" description="IPT/TIG 1">
    <location>
        <begin position="841"/>
        <end position="934"/>
    </location>
</feature>
<feature type="domain" description="IPT/TIG 2">
    <location>
        <begin position="936"/>
        <end position="1021"/>
    </location>
</feature>
<feature type="domain" description="IPT/TIG 3">
    <location>
        <begin position="1024"/>
        <end position="1123"/>
    </location>
</feature>
<feature type="domain" description="IPT/TIG 4">
    <location>
        <begin position="1126"/>
        <end position="1212"/>
    </location>
</feature>
<feature type="coiled-coil region" evidence="3">
    <location>
        <begin position="1240"/>
        <end position="1294"/>
    </location>
</feature>
<feature type="modified residue" description="Phosphoserine" evidence="2">
    <location>
        <position position="1597"/>
    </location>
</feature>
<feature type="glycosylation site" description="N-linked (GlcNAc...) asparagine" evidence="3">
    <location>
        <position position="60"/>
    </location>
</feature>
<feature type="glycosylation site" description="N-linked (GlcNAc...) asparagine" evidence="3">
    <location>
        <position position="549"/>
    </location>
</feature>
<feature type="glycosylation site" description="N-linked (GlcNAc...) asparagine" evidence="3">
    <location>
        <position position="1163"/>
    </location>
</feature>
<feature type="disulfide bond" evidence="4">
    <location>
        <begin position="78"/>
        <end position="87"/>
    </location>
</feature>
<feature type="disulfide bond" evidence="4">
    <location>
        <begin position="113"/>
        <end position="121"/>
    </location>
</feature>
<feature type="disulfide bond" evidence="4">
    <location>
        <begin position="267"/>
        <end position="388"/>
    </location>
</feature>
<feature type="disulfide bond" evidence="4">
    <location>
        <begin position="283"/>
        <end position="339"/>
    </location>
</feature>
<feature type="disulfide bond" evidence="4">
    <location>
        <begin position="357"/>
        <end position="376"/>
    </location>
</feature>
<feature type="disulfide bond" evidence="4">
    <location>
        <begin position="492"/>
        <end position="509"/>
    </location>
</feature>
<feature type="disulfide bond" evidence="4">
    <location>
        <begin position="498"/>
        <end position="540"/>
    </location>
</feature>
<feature type="disulfide bond" evidence="4">
    <location>
        <begin position="501"/>
        <end position="518"/>
    </location>
</feature>
<feature type="disulfide bond" evidence="4">
    <location>
        <begin position="512"/>
        <end position="524"/>
    </location>
</feature>
<feature type="disulfide bond" evidence="4">
    <location>
        <begin position="575"/>
        <end position="595"/>
    </location>
</feature>
<sequence length="1872" mass="207982">MHTVCLLPLLFFTIGGCLGSSRPFRTFVVTDTTLTHLAVHRVTGEVFVGAVNRVFKLASNLTELRAHVTGPIEDNARCYPPPSMRVCSHRLVPVDNVNKLLLIDYAARRLVACGSIWQGICQFLRLDDLFKLGEPHHRKEHYLSGAQEPDSMAGVIVEQGQGPSKLFVGTAVDGKSEYFPTLSSRKLIDDEDSGDMFSLVYQDEFVSSQIKIPSDTLSLYPAFDIYYIYGFVSASFVYFLTLQLDTQQTLLDTAGEKFFTSKIVRMCAGDSEFYSYVEFPIGCSWRGVEYRLVQSAHLAKPGLLLAQALGVPADEDVLFTIFSQGQKNRANPPRQTILCLFTLSSINAHIRRRIQSCYRGEGTLALPWLLNKELPCINTPMQINGNFCGLVLNQPLGGLHVIEGLPLLADSTDGMASVAAYTYHQHSVVFIGTRSGNLKKVRVDGSQDAQLYETVSVVQGTPILRDLLFSPDHRHIYLLSEKQVSQLPVETCEQYLSCAACLGSGDPHCGWCVLQHRCCREGACPGASAPHGFAEELNKCIQVRVRPNNVSVTSSGVQLTVAMRNVPDLSLGVSCSFEEVTESEAILLPSGELRCPSPSLQELQTLTRGHGATHTVRLQLLSMETGVRFAGVDFVFYNCSALQSCMSCVGSPYPCHWCKYRHVCTSHPHECSFQEGRVHSPEGCPEILPRGDLLIPVGVMQPLTLRAKNLPQPQSGQKNYECVVRVQGRQHRVPAVRFNSSSVQCQNASYFYEGDEFGDTELDFSVVWDGDFPIDKPPSFRALLYKCWAQRPSCGLCLKADPRFNCGWCISEHRCQLRVHCPAPKSNWMHPSQKGARCSHPRITQIHPLTGPKEGGTRVTIVGENLGLTSREVGLRVAGVRCNSIPTEYVSAERIVCEMEESLVPSPPPGPAELCVGDCSADFRTQSQQLYSFVTPTLDRVSPTRGPASGGTRLTISGTSLDAGSRVTVIIRDGECQFVRRDAEAIVCISPISTLGPSQAPIILAIDHANISSTGVIYTYTQDPTVTHLEPTWSIINGSTSITVSGTHLLTVQEPRVRAKYRGIETTNTCQVINDTAMLCKAPGIFLGHPQPRAQGEHPDEFGFLLDHVQAARSLNRSSFTYYPDPSFEPLGPSGVLDVKPGSHVVLKGKNLIPAAAGSSRLNYTVLIGGQPCALTVSDTQLLCDSPSQTGRQPVMVLVGGLEFWLGTLHITADRALTLPAMVGLAAGGGLLLLAITVVLVAYKRKTQDADRTLKRLQLQMDNLESRVALECKEAFAELQTDINELTNHMDGVQIPFLDYRTYAVRVLFPGIEAHPVLKELDTPPNVEKALRLFGQLLHSRAFLLTFIHTLEAQSSFSMRDRGTVASLTMVALQSRLDYATGLLKQLLADLIEKNLESKNHPKLLLRRTESVAEKMLTNWFTFLLHKFLKECAGEPLFLLYCAIKQQMEKGPIDAITGEARYSLSEDKLIRQQIDYKTLTLHCVCPESEGSAQVPVKVLNCDSITQAKDKLLDTVYKGIPYSQRPKAEDMDLEWRQGRMARIILQDEDITTKIECDWKRINSLAHYQVTDGSLVALVPKQVSAYNMANSFTFTRSLSRYESLLRAASSPDSLRSRAPMLTPDQEAGTKLWHLVKNHDHADHREGDRGSKMVSEIYLTRLLATKGTLQKFVDDLFETVFSTAHRGSALPLAIKYMFDFLDEQADQRQISDPDVRHTWKSNCLPLRFWVNVIKNPQFVFDIHKNSITDACLSVVAQTFMDSCSTSEHRLGKDSPSNKLLYAKDIPNYKSWVERYYRDIAKMASISDQDMDAYLVEQSRLHANDFNVLSALSELYFYVTKYRQEILTSLDRDASCRKHKLRQKLEQIITLVSSSS</sequence>
<protein>
    <recommendedName>
        <fullName>Plexin-A3</fullName>
    </recommendedName>
</protein>
<name>PLXA3_RAT</name>
<dbReference type="EMBL" id="AC094668">
    <property type="status" value="NOT_ANNOTATED_CDS"/>
    <property type="molecule type" value="Genomic_DNA"/>
</dbReference>
<dbReference type="EMBL" id="CH474099">
    <property type="protein sequence ID" value="EDL84973.1"/>
    <property type="molecule type" value="Genomic_DNA"/>
</dbReference>
<dbReference type="RefSeq" id="NP_001101051.2">
    <property type="nucleotide sequence ID" value="NM_001107581.2"/>
</dbReference>
<dbReference type="RefSeq" id="XP_006229639.1">
    <property type="nucleotide sequence ID" value="XM_006229577.5"/>
</dbReference>
<dbReference type="RefSeq" id="XP_017457512.1">
    <property type="nucleotide sequence ID" value="XM_017602023.1"/>
</dbReference>
<dbReference type="SMR" id="D3ZPX4"/>
<dbReference type="FunCoup" id="D3ZPX4">
    <property type="interactions" value="1778"/>
</dbReference>
<dbReference type="STRING" id="10116.ENSRNOP00000068735"/>
<dbReference type="GlyCosmos" id="D3ZPX4">
    <property type="glycosylation" value="3 sites, No reported glycans"/>
</dbReference>
<dbReference type="GlyGen" id="D3ZPX4">
    <property type="glycosylation" value="4 sites"/>
</dbReference>
<dbReference type="iPTMnet" id="D3ZPX4"/>
<dbReference type="PhosphoSitePlus" id="D3ZPX4"/>
<dbReference type="PaxDb" id="10116-ENSRNOP00000053147"/>
<dbReference type="PeptideAtlas" id="D3ZPX4"/>
<dbReference type="Ensembl" id="ENSRNOT00000083148.2">
    <property type="protein sequence ID" value="ENSRNOP00000068735.1"/>
    <property type="gene ID" value="ENSRNOG00000060464.2"/>
</dbReference>
<dbReference type="GeneID" id="309280"/>
<dbReference type="KEGG" id="rno:309280"/>
<dbReference type="AGR" id="RGD:1584973"/>
<dbReference type="CTD" id="55558"/>
<dbReference type="RGD" id="1584973">
    <property type="gene designation" value="Plxna3"/>
</dbReference>
<dbReference type="eggNOG" id="KOG3610">
    <property type="taxonomic scope" value="Eukaryota"/>
</dbReference>
<dbReference type="GeneTree" id="ENSGT01050000244850"/>
<dbReference type="HOGENOM" id="CLU_001436_2_0_1"/>
<dbReference type="InParanoid" id="D3ZPX4"/>
<dbReference type="OMA" id="CPEILPR"/>
<dbReference type="OrthoDB" id="125363at2759"/>
<dbReference type="PhylomeDB" id="D3ZPX4"/>
<dbReference type="TreeFam" id="TF312962"/>
<dbReference type="Reactome" id="R-RNO-399954">
    <property type="pathway name" value="Sema3A PAK dependent Axon repulsion"/>
</dbReference>
<dbReference type="Reactome" id="R-RNO-399955">
    <property type="pathway name" value="SEMA3A-Plexin repulsion signaling by inhibiting Integrin adhesion"/>
</dbReference>
<dbReference type="Reactome" id="R-RNO-399956">
    <property type="pathway name" value="CRMPs in Sema3A signaling"/>
</dbReference>
<dbReference type="PRO" id="PR:D3ZPX4"/>
<dbReference type="Proteomes" id="UP000002494">
    <property type="component" value="Chromosome X"/>
</dbReference>
<dbReference type="Proteomes" id="UP000234681">
    <property type="component" value="Chromosome 1"/>
</dbReference>
<dbReference type="Bgee" id="ENSRNOG00000060464">
    <property type="expression patterns" value="Expressed in frontal cortex and 19 other cell types or tissues"/>
</dbReference>
<dbReference type="GO" id="GO:0005886">
    <property type="term" value="C:plasma membrane"/>
    <property type="evidence" value="ECO:0000318"/>
    <property type="project" value="GO_Central"/>
</dbReference>
<dbReference type="GO" id="GO:0002116">
    <property type="term" value="C:semaphorin receptor complex"/>
    <property type="evidence" value="ECO:0000318"/>
    <property type="project" value="GO_Central"/>
</dbReference>
<dbReference type="GO" id="GO:0017154">
    <property type="term" value="F:semaphorin receptor activity"/>
    <property type="evidence" value="ECO:0000266"/>
    <property type="project" value="RGD"/>
</dbReference>
<dbReference type="GO" id="GO:0048846">
    <property type="term" value="P:axon extension involved in axon guidance"/>
    <property type="evidence" value="ECO:0000266"/>
    <property type="project" value="RGD"/>
</dbReference>
<dbReference type="GO" id="GO:0007411">
    <property type="term" value="P:axon guidance"/>
    <property type="evidence" value="ECO:0000266"/>
    <property type="project" value="RGD"/>
</dbReference>
<dbReference type="GO" id="GO:0021785">
    <property type="term" value="P:branchiomotor neuron axon guidance"/>
    <property type="evidence" value="ECO:0000266"/>
    <property type="project" value="RGD"/>
</dbReference>
<dbReference type="GO" id="GO:0021612">
    <property type="term" value="P:facial nerve structural organization"/>
    <property type="evidence" value="ECO:0000266"/>
    <property type="project" value="RGD"/>
</dbReference>
<dbReference type="GO" id="GO:0021828">
    <property type="term" value="P:gonadotrophin-releasing hormone neuronal migration to the hypothalamus"/>
    <property type="evidence" value="ECO:0000266"/>
    <property type="project" value="RGD"/>
</dbReference>
<dbReference type="GO" id="GO:0021766">
    <property type="term" value="P:hippocampus development"/>
    <property type="evidence" value="ECO:0000266"/>
    <property type="project" value="RGD"/>
</dbReference>
<dbReference type="GO" id="GO:0008045">
    <property type="term" value="P:motor neuron axon guidance"/>
    <property type="evidence" value="ECO:0000318"/>
    <property type="project" value="GO_Central"/>
</dbReference>
<dbReference type="GO" id="GO:0050919">
    <property type="term" value="P:negative chemotaxis"/>
    <property type="evidence" value="ECO:0000266"/>
    <property type="project" value="RGD"/>
</dbReference>
<dbReference type="GO" id="GO:0048843">
    <property type="term" value="P:negative regulation of axon extension involved in axon guidance"/>
    <property type="evidence" value="ECO:0000266"/>
    <property type="project" value="RGD"/>
</dbReference>
<dbReference type="GO" id="GO:1990138">
    <property type="term" value="P:neuron projection extension"/>
    <property type="evidence" value="ECO:0000266"/>
    <property type="project" value="RGD"/>
</dbReference>
<dbReference type="GO" id="GO:0097485">
    <property type="term" value="P:neuron projection guidance"/>
    <property type="evidence" value="ECO:0000266"/>
    <property type="project" value="RGD"/>
</dbReference>
<dbReference type="GO" id="GO:0021628">
    <property type="term" value="P:olfactory nerve formation"/>
    <property type="evidence" value="ECO:0000266"/>
    <property type="project" value="RGD"/>
</dbReference>
<dbReference type="GO" id="GO:0051495">
    <property type="term" value="P:positive regulation of cytoskeleton organization"/>
    <property type="evidence" value="ECO:0000266"/>
    <property type="project" value="RGD"/>
</dbReference>
<dbReference type="GO" id="GO:0021860">
    <property type="term" value="P:pyramidal neuron development"/>
    <property type="evidence" value="ECO:0000266"/>
    <property type="project" value="RGD"/>
</dbReference>
<dbReference type="GO" id="GO:0030334">
    <property type="term" value="P:regulation of cell migration"/>
    <property type="evidence" value="ECO:0000318"/>
    <property type="project" value="GO_Central"/>
</dbReference>
<dbReference type="GO" id="GO:0071526">
    <property type="term" value="P:semaphorin-plexin signaling pathway"/>
    <property type="evidence" value="ECO:0000266"/>
    <property type="project" value="RGD"/>
</dbReference>
<dbReference type="GO" id="GO:0007416">
    <property type="term" value="P:synapse assembly"/>
    <property type="evidence" value="ECO:0000318"/>
    <property type="project" value="GO_Central"/>
</dbReference>
<dbReference type="GO" id="GO:0021637">
    <property type="term" value="P:trigeminal nerve structural organization"/>
    <property type="evidence" value="ECO:0000266"/>
    <property type="project" value="RGD"/>
</dbReference>
<dbReference type="CDD" id="cd00603">
    <property type="entry name" value="IPT_PCSR"/>
    <property type="match status" value="1"/>
</dbReference>
<dbReference type="CDD" id="cd01180">
    <property type="entry name" value="IPT_plexin_repeat1"/>
    <property type="match status" value="1"/>
</dbReference>
<dbReference type="CDD" id="cd01179">
    <property type="entry name" value="IPT_plexin_repeat2"/>
    <property type="match status" value="1"/>
</dbReference>
<dbReference type="CDD" id="cd01181">
    <property type="entry name" value="IPT_plexin_repeat3"/>
    <property type="match status" value="1"/>
</dbReference>
<dbReference type="CDD" id="cd12790">
    <property type="entry name" value="RasGAP_plexin_A"/>
    <property type="match status" value="1"/>
</dbReference>
<dbReference type="CDD" id="cd11273">
    <property type="entry name" value="Sema_plexin_A3"/>
    <property type="match status" value="1"/>
</dbReference>
<dbReference type="FunFam" id="1.10.506.10:FF:000005">
    <property type="entry name" value="Plexin A1"/>
    <property type="match status" value="1"/>
</dbReference>
<dbReference type="FunFam" id="1.10.506.10:FF:000006">
    <property type="entry name" value="Plexin A1"/>
    <property type="match status" value="1"/>
</dbReference>
<dbReference type="FunFam" id="2.60.40.10:FF:000123">
    <property type="entry name" value="Plexin A1"/>
    <property type="match status" value="1"/>
</dbReference>
<dbReference type="FunFam" id="2.130.10.10:FF:000006">
    <property type="entry name" value="Plexin A2"/>
    <property type="match status" value="1"/>
</dbReference>
<dbReference type="FunFam" id="2.60.40.10:FF:000071">
    <property type="entry name" value="Plexin A2"/>
    <property type="match status" value="1"/>
</dbReference>
<dbReference type="FunFam" id="3.10.20.90:FF:000157">
    <property type="entry name" value="Plexin A3"/>
    <property type="match status" value="1"/>
</dbReference>
<dbReference type="FunFam" id="2.60.40.10:FF:000329">
    <property type="entry name" value="Plexin A4"/>
    <property type="match status" value="1"/>
</dbReference>
<dbReference type="FunFam" id="2.60.40.10:FF:001973">
    <property type="entry name" value="Plexin A4, B"/>
    <property type="match status" value="1"/>
</dbReference>
<dbReference type="FunFam" id="2.60.40.10:FF:000630">
    <property type="entry name" value="Plexin D1"/>
    <property type="match status" value="1"/>
</dbReference>
<dbReference type="Gene3D" id="1.10.506.10">
    <property type="entry name" value="GTPase Activation - p120gap, domain 1"/>
    <property type="match status" value="2"/>
</dbReference>
<dbReference type="Gene3D" id="2.60.40.10">
    <property type="entry name" value="Immunoglobulins"/>
    <property type="match status" value="5"/>
</dbReference>
<dbReference type="Gene3D" id="2.130.10.10">
    <property type="entry name" value="YVTN repeat-like/Quinoprotein amine dehydrogenase"/>
    <property type="match status" value="1"/>
</dbReference>
<dbReference type="InterPro" id="IPR013783">
    <property type="entry name" value="Ig-like_fold"/>
</dbReference>
<dbReference type="InterPro" id="IPR014756">
    <property type="entry name" value="Ig_E-set"/>
</dbReference>
<dbReference type="InterPro" id="IPR002909">
    <property type="entry name" value="IPT_dom"/>
</dbReference>
<dbReference type="InterPro" id="IPR031148">
    <property type="entry name" value="Plexin"/>
</dbReference>
<dbReference type="InterPro" id="IPR013548">
    <property type="entry name" value="Plexin_cytoplasmic_RasGAP_dom"/>
</dbReference>
<dbReference type="InterPro" id="IPR046800">
    <property type="entry name" value="Plexin_RBD"/>
</dbReference>
<dbReference type="InterPro" id="IPR002165">
    <property type="entry name" value="Plexin_repeat"/>
</dbReference>
<dbReference type="InterPro" id="IPR016201">
    <property type="entry name" value="PSI"/>
</dbReference>
<dbReference type="InterPro" id="IPR008936">
    <property type="entry name" value="Rho_GTPase_activation_prot"/>
</dbReference>
<dbReference type="InterPro" id="IPR001627">
    <property type="entry name" value="Semap_dom"/>
</dbReference>
<dbReference type="InterPro" id="IPR036352">
    <property type="entry name" value="Semap_dom_sf"/>
</dbReference>
<dbReference type="InterPro" id="IPR041019">
    <property type="entry name" value="TIG1_plexin"/>
</dbReference>
<dbReference type="InterPro" id="IPR041362">
    <property type="entry name" value="TIG2_plexin"/>
</dbReference>
<dbReference type="InterPro" id="IPR015943">
    <property type="entry name" value="WD40/YVTN_repeat-like_dom_sf"/>
</dbReference>
<dbReference type="PANTHER" id="PTHR22625">
    <property type="entry name" value="PLEXIN"/>
    <property type="match status" value="1"/>
</dbReference>
<dbReference type="PANTHER" id="PTHR22625:SF32">
    <property type="entry name" value="PLEXIN-A3"/>
    <property type="match status" value="1"/>
</dbReference>
<dbReference type="Pfam" id="PF08337">
    <property type="entry name" value="Plexin_cytopl"/>
    <property type="match status" value="1"/>
</dbReference>
<dbReference type="Pfam" id="PF20170">
    <property type="entry name" value="Plexin_RBD"/>
    <property type="match status" value="1"/>
</dbReference>
<dbReference type="Pfam" id="PF01437">
    <property type="entry name" value="PSI"/>
    <property type="match status" value="2"/>
</dbReference>
<dbReference type="Pfam" id="PF24479">
    <property type="entry name" value="PSI_PlexinA-B"/>
    <property type="match status" value="1"/>
</dbReference>
<dbReference type="Pfam" id="PF01403">
    <property type="entry name" value="Sema"/>
    <property type="match status" value="1"/>
</dbReference>
<dbReference type="Pfam" id="PF01833">
    <property type="entry name" value="TIG"/>
    <property type="match status" value="4"/>
</dbReference>
<dbReference type="Pfam" id="PF18020">
    <property type="entry name" value="TIG_2"/>
    <property type="match status" value="1"/>
</dbReference>
<dbReference type="Pfam" id="PF17960">
    <property type="entry name" value="TIG_plexin"/>
    <property type="match status" value="1"/>
</dbReference>
<dbReference type="SMART" id="SM00429">
    <property type="entry name" value="IPT"/>
    <property type="match status" value="4"/>
</dbReference>
<dbReference type="SMART" id="SM00423">
    <property type="entry name" value="PSI"/>
    <property type="match status" value="3"/>
</dbReference>
<dbReference type="SMART" id="SM00630">
    <property type="entry name" value="Sema"/>
    <property type="match status" value="1"/>
</dbReference>
<dbReference type="SUPFAM" id="SSF81296">
    <property type="entry name" value="E set domains"/>
    <property type="match status" value="4"/>
</dbReference>
<dbReference type="SUPFAM" id="SSF48350">
    <property type="entry name" value="GTPase activation domain, GAP"/>
    <property type="match status" value="1"/>
</dbReference>
<dbReference type="SUPFAM" id="SSF103575">
    <property type="entry name" value="Plexin repeat"/>
    <property type="match status" value="1"/>
</dbReference>
<dbReference type="SUPFAM" id="SSF101912">
    <property type="entry name" value="Sema domain"/>
    <property type="match status" value="1"/>
</dbReference>
<dbReference type="PROSITE" id="PS51004">
    <property type="entry name" value="SEMA"/>
    <property type="match status" value="1"/>
</dbReference>
<gene>
    <name type="primary">Plxna3</name>
</gene>
<evidence type="ECO:0000250" key="1"/>
<evidence type="ECO:0000250" key="2">
    <source>
        <dbReference type="UniProtKB" id="P51805"/>
    </source>
</evidence>
<evidence type="ECO:0000255" key="3"/>
<evidence type="ECO:0000255" key="4">
    <source>
        <dbReference type="PROSITE-ProRule" id="PRU00352"/>
    </source>
</evidence>
<evidence type="ECO:0000305" key="5"/>